<organism>
    <name type="scientific">Bacillus pumilus (strain SAFR-032)</name>
    <dbReference type="NCBI Taxonomy" id="315750"/>
    <lineage>
        <taxon>Bacteria</taxon>
        <taxon>Bacillati</taxon>
        <taxon>Bacillota</taxon>
        <taxon>Bacilli</taxon>
        <taxon>Bacillales</taxon>
        <taxon>Bacillaceae</taxon>
        <taxon>Bacillus</taxon>
    </lineage>
</organism>
<evidence type="ECO:0000255" key="1">
    <source>
        <dbReference type="HAMAP-Rule" id="MF_00453"/>
    </source>
</evidence>
<proteinExistence type="inferred from homology"/>
<sequence>MNSVDLKEDLQSLLSLENTHQNLSVPKLVEKILARDEGVLTSTGAVRATTGAYTGRSPKDKFIVKEESSEHKIDWGQVNQPISKEAFDRLYTKVVSYLKERDELFVFEGFAGADERYRMPITVVNEFAWHNLFAKQLFIRPDGSTPSSNEKPFTILSAPHFKADPETDGTNSETFIIVSFEKRTILIGGTEYAGEMKKSIFSVMNYLLPEQDILSMHCSANVGQEGDVALFFGLSGTGKTTLSASASRKLIGDDEHGWSGSGVFNIEGGCYAKCVNLSEEKEPQIYKAISFGSVLENVVLDEETREADYDDTFFTENTRAAYPIEMIDNIVKPSIAGHPSAIVFLTADAFGVLPPISRLTKEQAMYHFLSGYTSKLAGTERGVTSPETTFSTCFGSPFLPLPAHVYAEMLGKKIDEHGAKVFLVNTGWTGGGYGTGKRMNLAHTRAMVQAAIEGDLDNAEMITDDIFGLHIPLHIPGVPDEVLQPSKTWDDQEAYQEKAHFLANEFKKNFQKFSHAASDIEAKGGPLV</sequence>
<comment type="function">
    <text evidence="1">Involved in the gluconeogenesis. Catalyzes the conversion of oxaloacetate (OAA) to phosphoenolpyruvate (PEP) through direct phosphoryl transfer between the nucleoside triphosphate and OAA.</text>
</comment>
<comment type="catalytic activity">
    <reaction evidence="1">
        <text>oxaloacetate + ATP = phosphoenolpyruvate + ADP + CO2</text>
        <dbReference type="Rhea" id="RHEA:18617"/>
        <dbReference type="ChEBI" id="CHEBI:16452"/>
        <dbReference type="ChEBI" id="CHEBI:16526"/>
        <dbReference type="ChEBI" id="CHEBI:30616"/>
        <dbReference type="ChEBI" id="CHEBI:58702"/>
        <dbReference type="ChEBI" id="CHEBI:456216"/>
        <dbReference type="EC" id="4.1.1.49"/>
    </reaction>
</comment>
<comment type="cofactor">
    <cofactor evidence="1">
        <name>Mn(2+)</name>
        <dbReference type="ChEBI" id="CHEBI:29035"/>
    </cofactor>
    <text evidence="1">Binds 1 Mn(2+) ion per subunit.</text>
</comment>
<comment type="pathway">
    <text evidence="1">Carbohydrate biosynthesis; gluconeogenesis.</text>
</comment>
<comment type="subcellular location">
    <subcellularLocation>
        <location evidence="1">Cytoplasm</location>
    </subcellularLocation>
</comment>
<comment type="similarity">
    <text evidence="1">Belongs to the phosphoenolpyruvate carboxykinase (ATP) family.</text>
</comment>
<name>PCKA_BACP2</name>
<accession>A8FGH8</accession>
<feature type="chain" id="PRO_1000060300" description="Phosphoenolpyruvate carboxykinase (ATP)">
    <location>
        <begin position="1"/>
        <end position="528"/>
    </location>
</feature>
<feature type="binding site" evidence="1">
    <location>
        <position position="56"/>
    </location>
    <ligand>
        <name>substrate</name>
    </ligand>
</feature>
<feature type="binding site" evidence="1">
    <location>
        <position position="192"/>
    </location>
    <ligand>
        <name>substrate</name>
    </ligand>
</feature>
<feature type="binding site" evidence="1">
    <location>
        <position position="198"/>
    </location>
    <ligand>
        <name>ATP</name>
        <dbReference type="ChEBI" id="CHEBI:30616"/>
    </ligand>
</feature>
<feature type="binding site" evidence="1">
    <location>
        <position position="198"/>
    </location>
    <ligand>
        <name>Mn(2+)</name>
        <dbReference type="ChEBI" id="CHEBI:29035"/>
    </ligand>
</feature>
<feature type="binding site" evidence="1">
    <location>
        <position position="198"/>
    </location>
    <ligand>
        <name>substrate</name>
    </ligand>
</feature>
<feature type="binding site" evidence="1">
    <location>
        <position position="217"/>
    </location>
    <ligand>
        <name>ATP</name>
        <dbReference type="ChEBI" id="CHEBI:30616"/>
    </ligand>
</feature>
<feature type="binding site" evidence="1">
    <location>
        <position position="217"/>
    </location>
    <ligand>
        <name>Mn(2+)</name>
        <dbReference type="ChEBI" id="CHEBI:29035"/>
    </ligand>
</feature>
<feature type="binding site" evidence="1">
    <location>
        <begin position="233"/>
        <end position="241"/>
    </location>
    <ligand>
        <name>ATP</name>
        <dbReference type="ChEBI" id="CHEBI:30616"/>
    </ligand>
</feature>
<feature type="binding site" evidence="1">
    <location>
        <position position="254"/>
    </location>
    <ligand>
        <name>Mn(2+)</name>
        <dbReference type="ChEBI" id="CHEBI:29035"/>
    </ligand>
</feature>
<feature type="binding site" evidence="1">
    <location>
        <position position="282"/>
    </location>
    <ligand>
        <name>ATP</name>
        <dbReference type="ChEBI" id="CHEBI:30616"/>
    </ligand>
</feature>
<feature type="binding site" evidence="1">
    <location>
        <position position="319"/>
    </location>
    <ligand>
        <name>ATP</name>
        <dbReference type="ChEBI" id="CHEBI:30616"/>
    </ligand>
</feature>
<feature type="binding site" evidence="1">
    <location>
        <position position="319"/>
    </location>
    <ligand>
        <name>substrate</name>
    </ligand>
</feature>
<feature type="binding site" evidence="1">
    <location>
        <position position="444"/>
    </location>
    <ligand>
        <name>ATP</name>
        <dbReference type="ChEBI" id="CHEBI:30616"/>
    </ligand>
</feature>
<protein>
    <recommendedName>
        <fullName evidence="1">Phosphoenolpyruvate carboxykinase (ATP)</fullName>
        <shortName evidence="1">PCK</shortName>
        <shortName evidence="1">PEP carboxykinase</shortName>
        <shortName evidence="1">PEPCK</shortName>
        <ecNumber evidence="1">4.1.1.49</ecNumber>
    </recommendedName>
</protein>
<keyword id="KW-0067">ATP-binding</keyword>
<keyword id="KW-0963">Cytoplasm</keyword>
<keyword id="KW-0210">Decarboxylase</keyword>
<keyword id="KW-0312">Gluconeogenesis</keyword>
<keyword id="KW-0456">Lyase</keyword>
<keyword id="KW-0464">Manganese</keyword>
<keyword id="KW-0479">Metal-binding</keyword>
<keyword id="KW-0547">Nucleotide-binding</keyword>
<gene>
    <name evidence="1" type="primary">pckA</name>
    <name type="ordered locus">BPUM_2687</name>
</gene>
<dbReference type="EC" id="4.1.1.49" evidence="1"/>
<dbReference type="EMBL" id="CP000813">
    <property type="protein sequence ID" value="ABV63345.1"/>
    <property type="molecule type" value="Genomic_DNA"/>
</dbReference>
<dbReference type="RefSeq" id="WP_012010978.1">
    <property type="nucleotide sequence ID" value="NZ_VEIS01000006.1"/>
</dbReference>
<dbReference type="SMR" id="A8FGH8"/>
<dbReference type="STRING" id="315750.BPUM_2687"/>
<dbReference type="GeneID" id="5621952"/>
<dbReference type="KEGG" id="bpu:BPUM_2687"/>
<dbReference type="eggNOG" id="COG1866">
    <property type="taxonomic scope" value="Bacteria"/>
</dbReference>
<dbReference type="HOGENOM" id="CLU_018247_0_1_9"/>
<dbReference type="OrthoDB" id="9806325at2"/>
<dbReference type="UniPathway" id="UPA00138"/>
<dbReference type="Proteomes" id="UP000001355">
    <property type="component" value="Chromosome"/>
</dbReference>
<dbReference type="GO" id="GO:0005829">
    <property type="term" value="C:cytosol"/>
    <property type="evidence" value="ECO:0007669"/>
    <property type="project" value="TreeGrafter"/>
</dbReference>
<dbReference type="GO" id="GO:0005524">
    <property type="term" value="F:ATP binding"/>
    <property type="evidence" value="ECO:0007669"/>
    <property type="project" value="UniProtKB-UniRule"/>
</dbReference>
<dbReference type="GO" id="GO:0046872">
    <property type="term" value="F:metal ion binding"/>
    <property type="evidence" value="ECO:0007669"/>
    <property type="project" value="UniProtKB-KW"/>
</dbReference>
<dbReference type="GO" id="GO:0004612">
    <property type="term" value="F:phosphoenolpyruvate carboxykinase (ATP) activity"/>
    <property type="evidence" value="ECO:0007669"/>
    <property type="project" value="UniProtKB-UniRule"/>
</dbReference>
<dbReference type="GO" id="GO:0006094">
    <property type="term" value="P:gluconeogenesis"/>
    <property type="evidence" value="ECO:0007669"/>
    <property type="project" value="UniProtKB-UniRule"/>
</dbReference>
<dbReference type="CDD" id="cd00484">
    <property type="entry name" value="PEPCK_ATP"/>
    <property type="match status" value="1"/>
</dbReference>
<dbReference type="FunFam" id="2.170.8.10:FF:000001">
    <property type="entry name" value="Phosphoenolpyruvate carboxykinase (ATP)"/>
    <property type="match status" value="1"/>
</dbReference>
<dbReference type="FunFam" id="3.40.449.10:FF:000001">
    <property type="entry name" value="Phosphoenolpyruvate carboxykinase (ATP)"/>
    <property type="match status" value="1"/>
</dbReference>
<dbReference type="Gene3D" id="3.90.228.20">
    <property type="match status" value="1"/>
</dbReference>
<dbReference type="Gene3D" id="3.40.449.10">
    <property type="entry name" value="Phosphoenolpyruvate Carboxykinase, domain 1"/>
    <property type="match status" value="1"/>
</dbReference>
<dbReference type="Gene3D" id="2.170.8.10">
    <property type="entry name" value="Phosphoenolpyruvate Carboxykinase, domain 2"/>
    <property type="match status" value="1"/>
</dbReference>
<dbReference type="HAMAP" id="MF_00453">
    <property type="entry name" value="PEPCK_ATP"/>
    <property type="match status" value="1"/>
</dbReference>
<dbReference type="InterPro" id="IPR001272">
    <property type="entry name" value="PEP_carboxykinase_ATP"/>
</dbReference>
<dbReference type="InterPro" id="IPR013035">
    <property type="entry name" value="PEP_carboxykinase_C"/>
</dbReference>
<dbReference type="InterPro" id="IPR008210">
    <property type="entry name" value="PEP_carboxykinase_N"/>
</dbReference>
<dbReference type="NCBIfam" id="TIGR00224">
    <property type="entry name" value="pckA"/>
    <property type="match status" value="1"/>
</dbReference>
<dbReference type="NCBIfam" id="NF006820">
    <property type="entry name" value="PRK09344.1-2"/>
    <property type="match status" value="1"/>
</dbReference>
<dbReference type="NCBIfam" id="NF006821">
    <property type="entry name" value="PRK09344.1-3"/>
    <property type="match status" value="1"/>
</dbReference>
<dbReference type="PANTHER" id="PTHR30031:SF0">
    <property type="entry name" value="PHOSPHOENOLPYRUVATE CARBOXYKINASE (ATP)"/>
    <property type="match status" value="1"/>
</dbReference>
<dbReference type="PANTHER" id="PTHR30031">
    <property type="entry name" value="PHOSPHOENOLPYRUVATE CARBOXYKINASE ATP"/>
    <property type="match status" value="1"/>
</dbReference>
<dbReference type="Pfam" id="PF01293">
    <property type="entry name" value="PEPCK_ATP"/>
    <property type="match status" value="1"/>
</dbReference>
<dbReference type="PIRSF" id="PIRSF006294">
    <property type="entry name" value="PEP_crbxkin"/>
    <property type="match status" value="1"/>
</dbReference>
<dbReference type="SUPFAM" id="SSF68923">
    <property type="entry name" value="PEP carboxykinase N-terminal domain"/>
    <property type="match status" value="1"/>
</dbReference>
<dbReference type="SUPFAM" id="SSF53795">
    <property type="entry name" value="PEP carboxykinase-like"/>
    <property type="match status" value="1"/>
</dbReference>
<reference key="1">
    <citation type="journal article" date="2007" name="PLoS ONE">
        <title>Paradoxical DNA repair and peroxide resistance gene conservation in Bacillus pumilus SAFR-032.</title>
        <authorList>
            <person name="Gioia J."/>
            <person name="Yerrapragada S."/>
            <person name="Qin X."/>
            <person name="Jiang H."/>
            <person name="Igboeli O.C."/>
            <person name="Muzny D."/>
            <person name="Dugan-Rocha S."/>
            <person name="Ding Y."/>
            <person name="Hawes A."/>
            <person name="Liu W."/>
            <person name="Perez L."/>
            <person name="Kovar C."/>
            <person name="Dinh H."/>
            <person name="Lee S."/>
            <person name="Nazareth L."/>
            <person name="Blyth P."/>
            <person name="Holder M."/>
            <person name="Buhay C."/>
            <person name="Tirumalai M.R."/>
            <person name="Liu Y."/>
            <person name="Dasgupta I."/>
            <person name="Bokhetache L."/>
            <person name="Fujita M."/>
            <person name="Karouia F."/>
            <person name="Eswara Moorthy P."/>
            <person name="Siefert J."/>
            <person name="Uzman A."/>
            <person name="Buzumbo P."/>
            <person name="Verma A."/>
            <person name="Zwiya H."/>
            <person name="McWilliams B.D."/>
            <person name="Olowu A."/>
            <person name="Clinkenbeard K.D."/>
            <person name="Newcombe D."/>
            <person name="Golebiewski L."/>
            <person name="Petrosino J.F."/>
            <person name="Nicholson W.L."/>
            <person name="Fox G.E."/>
            <person name="Venkateswaran K."/>
            <person name="Highlander S.K."/>
            <person name="Weinstock G.M."/>
        </authorList>
    </citation>
    <scope>NUCLEOTIDE SEQUENCE [LARGE SCALE GENOMIC DNA]</scope>
    <source>
        <strain>SAFR-032</strain>
    </source>
</reference>